<dbReference type="EMBL" id="CP000513">
    <property type="protein sequence ID" value="ABQ13855.1"/>
    <property type="molecule type" value="Genomic_DNA"/>
</dbReference>
<dbReference type="RefSeq" id="WP_011927769.1">
    <property type="nucleotide sequence ID" value="NC_009446.1"/>
</dbReference>
<dbReference type="SMR" id="A5EX03"/>
<dbReference type="STRING" id="246195.DNO_0009"/>
<dbReference type="KEGG" id="dno:DNO_0009"/>
<dbReference type="eggNOG" id="COG0569">
    <property type="taxonomic scope" value="Bacteria"/>
</dbReference>
<dbReference type="eggNOG" id="COG2985">
    <property type="taxonomic scope" value="Bacteria"/>
</dbReference>
<dbReference type="HOGENOM" id="CLU_035023_3_1_6"/>
<dbReference type="OrthoDB" id="5166626at2"/>
<dbReference type="Proteomes" id="UP000000248">
    <property type="component" value="Chromosome"/>
</dbReference>
<dbReference type="GO" id="GO:0005886">
    <property type="term" value="C:plasma membrane"/>
    <property type="evidence" value="ECO:0007669"/>
    <property type="project" value="UniProtKB-SubCell"/>
</dbReference>
<dbReference type="GO" id="GO:0008324">
    <property type="term" value="F:monoatomic cation transmembrane transporter activity"/>
    <property type="evidence" value="ECO:0007669"/>
    <property type="project" value="InterPro"/>
</dbReference>
<dbReference type="GO" id="GO:0006813">
    <property type="term" value="P:potassium ion transport"/>
    <property type="evidence" value="ECO:0007669"/>
    <property type="project" value="InterPro"/>
</dbReference>
<dbReference type="Gene3D" id="3.30.70.1450">
    <property type="entry name" value="Regulator of K+ conductance, C-terminal domain"/>
    <property type="match status" value="2"/>
</dbReference>
<dbReference type="HAMAP" id="MF_01016">
    <property type="entry name" value="YidE"/>
    <property type="match status" value="1"/>
</dbReference>
<dbReference type="InterPro" id="IPR050144">
    <property type="entry name" value="AAE_transporter"/>
</dbReference>
<dbReference type="InterPro" id="IPR006037">
    <property type="entry name" value="RCK_C"/>
</dbReference>
<dbReference type="InterPro" id="IPR036721">
    <property type="entry name" value="RCK_C_sf"/>
</dbReference>
<dbReference type="InterPro" id="IPR023018">
    <property type="entry name" value="Transpt_YidE_put"/>
</dbReference>
<dbReference type="InterPro" id="IPR006512">
    <property type="entry name" value="YidE_YbjL"/>
</dbReference>
<dbReference type="NCBIfam" id="NF003007">
    <property type="entry name" value="PRK03818.1"/>
    <property type="match status" value="1"/>
</dbReference>
<dbReference type="NCBIfam" id="TIGR01625">
    <property type="entry name" value="YidE_YbjL_dupl"/>
    <property type="match status" value="2"/>
</dbReference>
<dbReference type="PANTHER" id="PTHR30445">
    <property type="entry name" value="K(+)_H(+) ANTIPORTER SUBUNIT KHTT"/>
    <property type="match status" value="1"/>
</dbReference>
<dbReference type="PANTHER" id="PTHR30445:SF3">
    <property type="entry name" value="TRANSPORT PROTEIN YIDE-RELATED"/>
    <property type="match status" value="1"/>
</dbReference>
<dbReference type="Pfam" id="PF06826">
    <property type="entry name" value="Asp-Al_Ex"/>
    <property type="match status" value="2"/>
</dbReference>
<dbReference type="Pfam" id="PF02080">
    <property type="entry name" value="TrkA_C"/>
    <property type="match status" value="1"/>
</dbReference>
<dbReference type="SUPFAM" id="SSF116726">
    <property type="entry name" value="TrkA C-terminal domain-like"/>
    <property type="match status" value="2"/>
</dbReference>
<dbReference type="PROSITE" id="PS51202">
    <property type="entry name" value="RCK_C"/>
    <property type="match status" value="2"/>
</dbReference>
<accession>A5EX03</accession>
<keyword id="KW-1003">Cell membrane</keyword>
<keyword id="KW-0472">Membrane</keyword>
<keyword id="KW-1185">Reference proteome</keyword>
<keyword id="KW-0677">Repeat</keyword>
<keyword id="KW-0812">Transmembrane</keyword>
<keyword id="KW-1133">Transmembrane helix</keyword>
<keyword id="KW-0813">Transport</keyword>
<name>Y009_DICNV</name>
<reference key="1">
    <citation type="journal article" date="2007" name="Nat. Biotechnol.">
        <title>Genome sequence and identification of candidate vaccine antigens from the animal pathogen Dichelobacter nodosus.</title>
        <authorList>
            <person name="Myers G.S.A."/>
            <person name="Parker D."/>
            <person name="Al-Hasani K."/>
            <person name="Kennan R.M."/>
            <person name="Seemann T."/>
            <person name="Ren Q."/>
            <person name="Badger J.H."/>
            <person name="Selengut J.D."/>
            <person name="Deboy R.T."/>
            <person name="Tettelin H."/>
            <person name="Boyce J.D."/>
            <person name="McCarl V.P."/>
            <person name="Han X."/>
            <person name="Nelson W.C."/>
            <person name="Madupu R."/>
            <person name="Mohamoud Y."/>
            <person name="Holley T."/>
            <person name="Fedorova N."/>
            <person name="Khouri H."/>
            <person name="Bottomley S.P."/>
            <person name="Whittington R.J."/>
            <person name="Adler B."/>
            <person name="Songer J.G."/>
            <person name="Rood J.I."/>
            <person name="Paulsen I.T."/>
        </authorList>
    </citation>
    <scope>NUCLEOTIDE SEQUENCE [LARGE SCALE GENOMIC DNA]</scope>
    <source>
        <strain>VCS1703A</strain>
    </source>
</reference>
<gene>
    <name type="ordered locus">DNO_0009</name>
</gene>
<organism>
    <name type="scientific">Dichelobacter nodosus (strain VCS1703A)</name>
    <dbReference type="NCBI Taxonomy" id="246195"/>
    <lineage>
        <taxon>Bacteria</taxon>
        <taxon>Pseudomonadati</taxon>
        <taxon>Pseudomonadota</taxon>
        <taxon>Gammaproteobacteria</taxon>
        <taxon>Cardiobacteriales</taxon>
        <taxon>Cardiobacteriaceae</taxon>
        <taxon>Dichelobacter</taxon>
    </lineage>
</organism>
<evidence type="ECO:0000255" key="1">
    <source>
        <dbReference type="HAMAP-Rule" id="MF_01016"/>
    </source>
</evidence>
<feature type="chain" id="PRO_0000329157" description="Putative transport protein DNO_0009">
    <location>
        <begin position="1"/>
        <end position="561"/>
    </location>
</feature>
<feature type="transmembrane region" description="Helical" evidence="1">
    <location>
        <begin position="4"/>
        <end position="24"/>
    </location>
</feature>
<feature type="transmembrane region" description="Helical" evidence="1">
    <location>
        <begin position="29"/>
        <end position="49"/>
    </location>
</feature>
<feature type="transmembrane region" description="Helical" evidence="1">
    <location>
        <begin position="74"/>
        <end position="94"/>
    </location>
</feature>
<feature type="transmembrane region" description="Helical" evidence="1">
    <location>
        <begin position="104"/>
        <end position="124"/>
    </location>
</feature>
<feature type="transmembrane region" description="Helical" evidence="1">
    <location>
        <begin position="166"/>
        <end position="186"/>
    </location>
</feature>
<feature type="transmembrane region" description="Helical" evidence="1">
    <location>
        <begin position="379"/>
        <end position="399"/>
    </location>
</feature>
<feature type="transmembrane region" description="Helical" evidence="1">
    <location>
        <begin position="411"/>
        <end position="433"/>
    </location>
</feature>
<feature type="transmembrane region" description="Helical" evidence="1">
    <location>
        <begin position="447"/>
        <end position="467"/>
    </location>
</feature>
<feature type="transmembrane region" description="Helical" evidence="1">
    <location>
        <begin position="472"/>
        <end position="492"/>
    </location>
</feature>
<feature type="transmembrane region" description="Helical" evidence="1">
    <location>
        <begin position="501"/>
        <end position="521"/>
    </location>
</feature>
<feature type="transmembrane region" description="Helical" evidence="1">
    <location>
        <begin position="538"/>
        <end position="558"/>
    </location>
</feature>
<feature type="domain" description="RCK C-terminal 1" evidence="1">
    <location>
        <begin position="198"/>
        <end position="283"/>
    </location>
</feature>
<feature type="domain" description="RCK C-terminal 2" evidence="1">
    <location>
        <begin position="285"/>
        <end position="369"/>
    </location>
</feature>
<comment type="subcellular location">
    <subcellularLocation>
        <location evidence="1">Cell membrane</location>
        <topology evidence="1">Multi-pass membrane protein</topology>
    </subcellularLocation>
</comment>
<comment type="similarity">
    <text evidence="1">Belongs to the AAE transporter (TC 2.A.81) family. YidE subfamily.</text>
</comment>
<sequence>MSSVAITICILSLVASLGLWLGNIKIRGVGLSIGGVLFGGIIISHIMNLPTVASFMQQKNIVLDSQTLYFVQEFGLILFVYTIGIQVGPGFFASLRSSGLKLNAFAALIVLLGGLCSVILYYLFSIPLPAILGILSGAVTNTPSLGAGKQIIAELGGEQMTELMGMGYAIAYPFGIIGVLLAMWLIRLIFKIRPERELQFFDKEQQRQKGLAGINIRITNPNINNILLREIPDYDLNTVIYSRLKRNDELIIPHPNTTLYLNDILHLVGNKKSLNKMQIILGEEAGHEPLNSGDSPIKNERAVVTNEQVCGKKLAQLQIQSQYDVVISRINRAGVELIPSDEMALQFGDVLHLVGRQKNIATVLSLIGNAQQKLQQVQMLPVFIGIGLGVLLGSIPIYLPGFPVALKLGLAGGPLVVALVLARIGSIGKLYWFMPPSANLALREIGIVLFLSVIGIHAGEHFFSTLLSKDGFSWICYGAIITLLPLLIAGIIARYYSKMNYLTICGLLAGAMTDTPALAFANAIQENNGASVLAYATVYPLTTFLRIMLPQLIAVLLWAAH</sequence>
<protein>
    <recommendedName>
        <fullName evidence="1">Putative transport protein DNO_0009</fullName>
    </recommendedName>
</protein>
<proteinExistence type="inferred from homology"/>